<accession>B8IHZ7</accession>
<name>RSMG_METNO</name>
<feature type="chain" id="PRO_1000118194" description="Ribosomal RNA small subunit methyltransferase G">
    <location>
        <begin position="1"/>
        <end position="212"/>
    </location>
</feature>
<feature type="binding site" evidence="1">
    <location>
        <position position="73"/>
    </location>
    <ligand>
        <name>S-adenosyl-L-methionine</name>
        <dbReference type="ChEBI" id="CHEBI:59789"/>
    </ligand>
</feature>
<feature type="binding site" evidence="1">
    <location>
        <begin position="127"/>
        <end position="128"/>
    </location>
    <ligand>
        <name>S-adenosyl-L-methionine</name>
        <dbReference type="ChEBI" id="CHEBI:59789"/>
    </ligand>
</feature>
<feature type="binding site" evidence="1">
    <location>
        <position position="143"/>
    </location>
    <ligand>
        <name>S-adenosyl-L-methionine</name>
        <dbReference type="ChEBI" id="CHEBI:59789"/>
    </ligand>
</feature>
<proteinExistence type="inferred from homology"/>
<protein>
    <recommendedName>
        <fullName evidence="1">Ribosomal RNA small subunit methyltransferase G</fullName>
        <ecNumber evidence="1">2.1.1.170</ecNumber>
    </recommendedName>
    <alternativeName>
        <fullName evidence="1">16S rRNA 7-methylguanosine methyltransferase</fullName>
        <shortName evidence="1">16S rRNA m7G methyltransferase</shortName>
    </alternativeName>
</protein>
<dbReference type="EC" id="2.1.1.170" evidence="1"/>
<dbReference type="EMBL" id="CP001349">
    <property type="protein sequence ID" value="ACL56035.1"/>
    <property type="molecule type" value="Genomic_DNA"/>
</dbReference>
<dbReference type="RefSeq" id="WP_015927733.1">
    <property type="nucleotide sequence ID" value="NC_011894.1"/>
</dbReference>
<dbReference type="SMR" id="B8IHZ7"/>
<dbReference type="STRING" id="460265.Mnod_1027"/>
<dbReference type="KEGG" id="mno:Mnod_1027"/>
<dbReference type="eggNOG" id="COG0357">
    <property type="taxonomic scope" value="Bacteria"/>
</dbReference>
<dbReference type="HOGENOM" id="CLU_065341_1_0_5"/>
<dbReference type="OrthoDB" id="9808773at2"/>
<dbReference type="Proteomes" id="UP000008207">
    <property type="component" value="Chromosome"/>
</dbReference>
<dbReference type="GO" id="GO:0005829">
    <property type="term" value="C:cytosol"/>
    <property type="evidence" value="ECO:0007669"/>
    <property type="project" value="TreeGrafter"/>
</dbReference>
<dbReference type="GO" id="GO:0070043">
    <property type="term" value="F:rRNA (guanine-N7-)-methyltransferase activity"/>
    <property type="evidence" value="ECO:0007669"/>
    <property type="project" value="UniProtKB-UniRule"/>
</dbReference>
<dbReference type="Gene3D" id="3.40.50.150">
    <property type="entry name" value="Vaccinia Virus protein VP39"/>
    <property type="match status" value="1"/>
</dbReference>
<dbReference type="HAMAP" id="MF_00074">
    <property type="entry name" value="16SrRNA_methyltr_G"/>
    <property type="match status" value="1"/>
</dbReference>
<dbReference type="InterPro" id="IPR003682">
    <property type="entry name" value="rRNA_ssu_MeTfrase_G"/>
</dbReference>
<dbReference type="InterPro" id="IPR029063">
    <property type="entry name" value="SAM-dependent_MTases_sf"/>
</dbReference>
<dbReference type="NCBIfam" id="TIGR00138">
    <property type="entry name" value="rsmG_gidB"/>
    <property type="match status" value="1"/>
</dbReference>
<dbReference type="PANTHER" id="PTHR31760">
    <property type="entry name" value="S-ADENOSYL-L-METHIONINE-DEPENDENT METHYLTRANSFERASES SUPERFAMILY PROTEIN"/>
    <property type="match status" value="1"/>
</dbReference>
<dbReference type="PANTHER" id="PTHR31760:SF0">
    <property type="entry name" value="S-ADENOSYL-L-METHIONINE-DEPENDENT METHYLTRANSFERASES SUPERFAMILY PROTEIN"/>
    <property type="match status" value="1"/>
</dbReference>
<dbReference type="Pfam" id="PF02527">
    <property type="entry name" value="GidB"/>
    <property type="match status" value="1"/>
</dbReference>
<dbReference type="PIRSF" id="PIRSF003078">
    <property type="entry name" value="GidB"/>
    <property type="match status" value="1"/>
</dbReference>
<dbReference type="SUPFAM" id="SSF53335">
    <property type="entry name" value="S-adenosyl-L-methionine-dependent methyltransferases"/>
    <property type="match status" value="1"/>
</dbReference>
<comment type="function">
    <text evidence="1">Specifically methylates the N7 position of guanine in position 527 of 16S rRNA.</text>
</comment>
<comment type="catalytic activity">
    <reaction evidence="1">
        <text>guanosine(527) in 16S rRNA + S-adenosyl-L-methionine = N(7)-methylguanosine(527) in 16S rRNA + S-adenosyl-L-homocysteine</text>
        <dbReference type="Rhea" id="RHEA:42732"/>
        <dbReference type="Rhea" id="RHEA-COMP:10209"/>
        <dbReference type="Rhea" id="RHEA-COMP:10210"/>
        <dbReference type="ChEBI" id="CHEBI:57856"/>
        <dbReference type="ChEBI" id="CHEBI:59789"/>
        <dbReference type="ChEBI" id="CHEBI:74269"/>
        <dbReference type="ChEBI" id="CHEBI:74480"/>
        <dbReference type="EC" id="2.1.1.170"/>
    </reaction>
</comment>
<comment type="subcellular location">
    <subcellularLocation>
        <location evidence="1">Cytoplasm</location>
    </subcellularLocation>
</comment>
<comment type="similarity">
    <text evidence="1">Belongs to the methyltransferase superfamily. RNA methyltransferase RsmG family.</text>
</comment>
<gene>
    <name evidence="1" type="primary">rsmG</name>
    <name type="ordered locus">Mnod_1027</name>
</gene>
<reference key="1">
    <citation type="submission" date="2009-01" db="EMBL/GenBank/DDBJ databases">
        <title>Complete sequence of chromosome of Methylobacterium nodulans ORS 2060.</title>
        <authorList>
            <consortium name="US DOE Joint Genome Institute"/>
            <person name="Lucas S."/>
            <person name="Copeland A."/>
            <person name="Lapidus A."/>
            <person name="Glavina del Rio T."/>
            <person name="Dalin E."/>
            <person name="Tice H."/>
            <person name="Bruce D."/>
            <person name="Goodwin L."/>
            <person name="Pitluck S."/>
            <person name="Sims D."/>
            <person name="Brettin T."/>
            <person name="Detter J.C."/>
            <person name="Han C."/>
            <person name="Larimer F."/>
            <person name="Land M."/>
            <person name="Hauser L."/>
            <person name="Kyrpides N."/>
            <person name="Ivanova N."/>
            <person name="Marx C.J."/>
            <person name="Richardson P."/>
        </authorList>
    </citation>
    <scope>NUCLEOTIDE SEQUENCE [LARGE SCALE GENOMIC DNA]</scope>
    <source>
        <strain>LMG 21967 / CNCM I-2342 / ORS 2060</strain>
    </source>
</reference>
<organism>
    <name type="scientific">Methylobacterium nodulans (strain LMG 21967 / CNCM I-2342 / ORS 2060)</name>
    <dbReference type="NCBI Taxonomy" id="460265"/>
    <lineage>
        <taxon>Bacteria</taxon>
        <taxon>Pseudomonadati</taxon>
        <taxon>Pseudomonadota</taxon>
        <taxon>Alphaproteobacteria</taxon>
        <taxon>Hyphomicrobiales</taxon>
        <taxon>Methylobacteriaceae</taxon>
        <taxon>Methylobacterium</taxon>
    </lineage>
</organism>
<keyword id="KW-0963">Cytoplasm</keyword>
<keyword id="KW-0489">Methyltransferase</keyword>
<keyword id="KW-1185">Reference proteome</keyword>
<keyword id="KW-0698">rRNA processing</keyword>
<keyword id="KW-0949">S-adenosyl-L-methionine</keyword>
<keyword id="KW-0808">Transferase</keyword>
<evidence type="ECO:0000255" key="1">
    <source>
        <dbReference type="HAMAP-Rule" id="MF_00074"/>
    </source>
</evidence>
<sequence>MSASDRDRVLAAAAVSRETAAALDLYVAQLARWQTVKNLVGPSTLPEVWTRHIADSLQLLDAAPGATRWLDLGSGAGIPGLILAIAGREARPQMQVDLVESNARKGAFLQETARLTGASARIHVSRIESVIGRFTGVEVVCARALAPLPQLLAWTAPLLKSGTIGLFPKGREAQSELTAARETWTFEADVIPSRTDSSAGIVRISSLSGQLP</sequence>